<organism>
    <name type="scientific">Homo sapiens</name>
    <name type="common">Human</name>
    <dbReference type="NCBI Taxonomy" id="9606"/>
    <lineage>
        <taxon>Eukaryota</taxon>
        <taxon>Metazoa</taxon>
        <taxon>Chordata</taxon>
        <taxon>Craniata</taxon>
        <taxon>Vertebrata</taxon>
        <taxon>Euteleostomi</taxon>
        <taxon>Mammalia</taxon>
        <taxon>Eutheria</taxon>
        <taxon>Euarchontoglires</taxon>
        <taxon>Primates</taxon>
        <taxon>Haplorrhini</taxon>
        <taxon>Catarrhini</taxon>
        <taxon>Hominidae</taxon>
        <taxon>Homo</taxon>
    </lineage>
</organism>
<name>TM10C_HUMAN</name>
<protein>
    <recommendedName>
        <fullName evidence="18">tRNA methyltransferase 10 homolog C</fullName>
    </recommendedName>
    <alternativeName>
        <fullName evidence="15">HBV pre-S2 trans-regulated protein 2</fullName>
    </alternativeName>
    <alternativeName>
        <fullName evidence="16">Mitochondrial ribonuclease P protein 1</fullName>
        <shortName evidence="16">Mitochondrial RNase P protein 1</shortName>
    </alternativeName>
    <alternativeName>
        <fullName>RNA (guanine-9-)-methyltransferase domain-containing protein 1</fullName>
    </alternativeName>
    <alternativeName>
        <fullName evidence="14">Renal carcinoma antigen NY-REN-49</fullName>
    </alternativeName>
    <alternativeName>
        <fullName evidence="17">mRNA methyladenosine-N(1)-methyltransferase</fullName>
        <ecNumber evidence="12">2.1.1.-</ecNumber>
    </alternativeName>
    <alternativeName>
        <fullName>tRNA (adenine(9)-N(1))-methyltransferase</fullName>
        <ecNumber evidence="7">2.1.1.218</ecNumber>
    </alternativeName>
    <alternativeName>
        <fullName>tRNA (guanine(9)-N(1))-methyltransferase</fullName>
        <ecNumber evidence="7">2.1.1.221</ecNumber>
    </alternativeName>
</protein>
<dbReference type="EC" id="2.1.1.-" evidence="12"/>
<dbReference type="EC" id="2.1.1.218" evidence="7"/>
<dbReference type="EC" id="2.1.1.221" evidence="7"/>
<dbReference type="EMBL" id="AF226052">
    <property type="protein sequence ID" value="AAF86952.1"/>
    <property type="molecule type" value="mRNA"/>
</dbReference>
<dbReference type="EMBL" id="AK000439">
    <property type="protein sequence ID" value="BAA91166.1"/>
    <property type="status" value="ALT_FRAME"/>
    <property type="molecule type" value="mRNA"/>
</dbReference>
<dbReference type="EMBL" id="CH471052">
    <property type="protein sequence ID" value="EAW79795.1"/>
    <property type="molecule type" value="Genomic_DNA"/>
</dbReference>
<dbReference type="EMBL" id="BC035967">
    <property type="protein sequence ID" value="AAH35967.2"/>
    <property type="status" value="ALT_INIT"/>
    <property type="molecule type" value="mRNA"/>
</dbReference>
<dbReference type="EMBL" id="AF155111">
    <property type="protein sequence ID" value="AAD42877.1"/>
    <property type="status" value="ALT_INIT"/>
    <property type="molecule type" value="mRNA"/>
</dbReference>
<dbReference type="EMBL" id="AY561707">
    <property type="protein sequence ID" value="AAS66980.1"/>
    <property type="molecule type" value="mRNA"/>
</dbReference>
<dbReference type="CCDS" id="CCDS43122.1"/>
<dbReference type="RefSeq" id="NP_060289.2">
    <property type="nucleotide sequence ID" value="NM_017819.4"/>
</dbReference>
<dbReference type="PDB" id="5NFJ">
    <property type="method" value="X-ray"/>
    <property type="resolution" value="1.96 A"/>
    <property type="chains" value="A/B/C=203-403"/>
</dbReference>
<dbReference type="PDB" id="7ONU">
    <property type="method" value="EM"/>
    <property type="resolution" value="3.00 A"/>
    <property type="chains" value="F=40-403"/>
</dbReference>
<dbReference type="PDB" id="8CBK">
    <property type="method" value="EM"/>
    <property type="resolution" value="2.76 A"/>
    <property type="chains" value="F=40-403"/>
</dbReference>
<dbReference type="PDB" id="8CBL">
    <property type="method" value="EM"/>
    <property type="resolution" value="2.79 A"/>
    <property type="chains" value="F=40-403"/>
</dbReference>
<dbReference type="PDB" id="8CBM">
    <property type="method" value="EM"/>
    <property type="resolution" value="3.14 A"/>
    <property type="chains" value="F=40-403"/>
</dbReference>
<dbReference type="PDB" id="8CBO">
    <property type="method" value="EM"/>
    <property type="resolution" value="3.20 A"/>
    <property type="chains" value="E=175-385"/>
</dbReference>
<dbReference type="PDB" id="8RR1">
    <property type="method" value="EM"/>
    <property type="resolution" value="2.93 A"/>
    <property type="chains" value="F=92-403"/>
</dbReference>
<dbReference type="PDB" id="8RR3">
    <property type="method" value="EM"/>
    <property type="resolution" value="3.40 A"/>
    <property type="chains" value="F=92-403"/>
</dbReference>
<dbReference type="PDB" id="8RR4">
    <property type="method" value="EM"/>
    <property type="resolution" value="3.20 A"/>
    <property type="chains" value="F=92-403"/>
</dbReference>
<dbReference type="PDB" id="9EY0">
    <property type="method" value="EM"/>
    <property type="resolution" value="2.78 A"/>
    <property type="chains" value="F=70-403"/>
</dbReference>
<dbReference type="PDB" id="9EY1">
    <property type="method" value="EM"/>
    <property type="resolution" value="2.90 A"/>
    <property type="chains" value="F=70-403"/>
</dbReference>
<dbReference type="PDB" id="9EY2">
    <property type="method" value="EM"/>
    <property type="resolution" value="2.96 A"/>
    <property type="chains" value="F=70-403"/>
</dbReference>
<dbReference type="PDB" id="9GCH">
    <property type="method" value="EM"/>
    <property type="resolution" value="1.90 A"/>
    <property type="chains" value="F=70-403"/>
</dbReference>
<dbReference type="PDBsum" id="5NFJ"/>
<dbReference type="PDBsum" id="7ONU"/>
<dbReference type="PDBsum" id="8CBK"/>
<dbReference type="PDBsum" id="8CBL"/>
<dbReference type="PDBsum" id="8CBM"/>
<dbReference type="PDBsum" id="8CBO"/>
<dbReference type="PDBsum" id="8RR1"/>
<dbReference type="PDBsum" id="8RR3"/>
<dbReference type="PDBsum" id="8RR4"/>
<dbReference type="PDBsum" id="9EY0"/>
<dbReference type="PDBsum" id="9EY1"/>
<dbReference type="PDBsum" id="9EY2"/>
<dbReference type="PDBsum" id="9GCH"/>
<dbReference type="EMDB" id="EMD-13002"/>
<dbReference type="EMDB" id="EMD-16543"/>
<dbReference type="EMDB" id="EMD-16544"/>
<dbReference type="EMDB" id="EMD-16545"/>
<dbReference type="EMDB" id="EMD-16547"/>
<dbReference type="EMDB" id="EMD-19453"/>
<dbReference type="EMDB" id="EMD-19455"/>
<dbReference type="EMDB" id="EMD-19457"/>
<dbReference type="EMDB" id="EMD-50050"/>
<dbReference type="EMDB" id="EMD-50051"/>
<dbReference type="EMDB" id="EMD-50052"/>
<dbReference type="EMDB" id="EMD-51230"/>
<dbReference type="SMR" id="Q7L0Y3"/>
<dbReference type="BioGRID" id="120271">
    <property type="interactions" value="229"/>
</dbReference>
<dbReference type="ComplexPortal" id="CPX-2240">
    <property type="entry name" value="Mitochondrial RNase Z complex"/>
</dbReference>
<dbReference type="ComplexPortal" id="CPX-26028">
    <property type="entry name" value="Mitochondrial CCA tRNA nucleotidyltransferase 1 complex"/>
</dbReference>
<dbReference type="ComplexPortal" id="CPX-6155">
    <property type="entry name" value="Mitochondrial ribonuclease P complex"/>
</dbReference>
<dbReference type="ComplexPortal" id="CPX-6161">
    <property type="entry name" value="Mitochondrial tRNA:m(1)R9 methyltransferase complex"/>
</dbReference>
<dbReference type="CORUM" id="Q7L0Y3"/>
<dbReference type="FunCoup" id="Q7L0Y3">
    <property type="interactions" value="2423"/>
</dbReference>
<dbReference type="IntAct" id="Q7L0Y3">
    <property type="interactions" value="79"/>
</dbReference>
<dbReference type="MINT" id="Q7L0Y3"/>
<dbReference type="STRING" id="9606.ENSP00000312356"/>
<dbReference type="MoonProt" id="Q7L0Y3"/>
<dbReference type="GlyGen" id="Q7L0Y3">
    <property type="glycosylation" value="2 sites, 1 O-linked glycan (2 sites)"/>
</dbReference>
<dbReference type="iPTMnet" id="Q7L0Y3"/>
<dbReference type="MetOSite" id="Q7L0Y3"/>
<dbReference type="PhosphoSitePlus" id="Q7L0Y3"/>
<dbReference type="SwissPalm" id="Q7L0Y3"/>
<dbReference type="BioMuta" id="TRMT10C"/>
<dbReference type="DMDM" id="221222465"/>
<dbReference type="jPOST" id="Q7L0Y3"/>
<dbReference type="MassIVE" id="Q7L0Y3"/>
<dbReference type="PaxDb" id="9606-ENSP00000312356"/>
<dbReference type="PeptideAtlas" id="Q7L0Y3"/>
<dbReference type="ProteomicsDB" id="68741"/>
<dbReference type="Pumba" id="Q7L0Y3"/>
<dbReference type="TopDownProteomics" id="Q7L0Y3"/>
<dbReference type="Antibodypedia" id="32284">
    <property type="antibodies" value="89 antibodies from 19 providers"/>
</dbReference>
<dbReference type="DNASU" id="54931"/>
<dbReference type="Ensembl" id="ENST00000309922.7">
    <property type="protein sequence ID" value="ENSP00000312356.6"/>
    <property type="gene ID" value="ENSG00000174173.7"/>
</dbReference>
<dbReference type="GeneID" id="54931"/>
<dbReference type="KEGG" id="hsa:54931"/>
<dbReference type="MANE-Select" id="ENST00000309922.7">
    <property type="protein sequence ID" value="ENSP00000312356.6"/>
    <property type="RefSeq nucleotide sequence ID" value="NM_017819.4"/>
    <property type="RefSeq protein sequence ID" value="NP_060289.2"/>
</dbReference>
<dbReference type="UCSC" id="uc003duz.5">
    <property type="organism name" value="human"/>
</dbReference>
<dbReference type="AGR" id="HGNC:26022"/>
<dbReference type="CTD" id="54931"/>
<dbReference type="DisGeNET" id="54931"/>
<dbReference type="GeneCards" id="TRMT10C"/>
<dbReference type="HGNC" id="HGNC:26022">
    <property type="gene designation" value="TRMT10C"/>
</dbReference>
<dbReference type="HPA" id="ENSG00000174173">
    <property type="expression patterns" value="Low tissue specificity"/>
</dbReference>
<dbReference type="MalaCards" id="TRMT10C"/>
<dbReference type="MIM" id="615423">
    <property type="type" value="gene"/>
</dbReference>
<dbReference type="MIM" id="616974">
    <property type="type" value="phenotype"/>
</dbReference>
<dbReference type="neXtProt" id="NX_Q7L0Y3"/>
<dbReference type="OpenTargets" id="ENSG00000174173"/>
<dbReference type="Orphanet" id="478042">
    <property type="disease" value="Combined oxidative phosphorylation defect type 30"/>
</dbReference>
<dbReference type="PharmGKB" id="PA134988378"/>
<dbReference type="VEuPathDB" id="HostDB:ENSG00000174173"/>
<dbReference type="eggNOG" id="KOG2967">
    <property type="taxonomic scope" value="Eukaryota"/>
</dbReference>
<dbReference type="GeneTree" id="ENSGT00530000063169"/>
<dbReference type="HOGENOM" id="CLU_034384_3_1_1"/>
<dbReference type="InParanoid" id="Q7L0Y3"/>
<dbReference type="OMA" id="TIMECVS"/>
<dbReference type="OrthoDB" id="9976048at2759"/>
<dbReference type="PAN-GO" id="Q7L0Y3">
    <property type="GO annotations" value="7 GO annotations based on evolutionary models"/>
</dbReference>
<dbReference type="PhylomeDB" id="Q7L0Y3"/>
<dbReference type="TreeFam" id="TF319795"/>
<dbReference type="BRENDA" id="2.1.1.218">
    <property type="organism ID" value="2681"/>
</dbReference>
<dbReference type="BRENDA" id="2.1.1.221">
    <property type="organism ID" value="2681"/>
</dbReference>
<dbReference type="PathwayCommons" id="Q7L0Y3"/>
<dbReference type="Reactome" id="R-HSA-6785470">
    <property type="pathway name" value="tRNA processing in the mitochondrion"/>
</dbReference>
<dbReference type="Reactome" id="R-HSA-6787450">
    <property type="pathway name" value="tRNA modification in the mitochondrion"/>
</dbReference>
<dbReference type="Reactome" id="R-HSA-8868766">
    <property type="pathway name" value="rRNA processing in the mitochondrion"/>
</dbReference>
<dbReference type="SignaLink" id="Q7L0Y3"/>
<dbReference type="BioGRID-ORCS" id="54931">
    <property type="hits" value="263 hits in 1167 CRISPR screens"/>
</dbReference>
<dbReference type="CD-CODE" id="5965E019">
    <property type="entry name" value="mtRNA granule"/>
</dbReference>
<dbReference type="ChiTaRS" id="TRMT10C">
    <property type="organism name" value="human"/>
</dbReference>
<dbReference type="GenomeRNAi" id="54931"/>
<dbReference type="Pharos" id="Q7L0Y3">
    <property type="development level" value="Tbio"/>
</dbReference>
<dbReference type="PRO" id="PR:Q7L0Y3"/>
<dbReference type="Proteomes" id="UP000005640">
    <property type="component" value="Chromosome 3"/>
</dbReference>
<dbReference type="RNAct" id="Q7L0Y3">
    <property type="molecule type" value="protein"/>
</dbReference>
<dbReference type="Bgee" id="ENSG00000174173">
    <property type="expression patterns" value="Expressed in left ventricle myocardium and 191 other cell types or tissues"/>
</dbReference>
<dbReference type="ExpressionAtlas" id="Q7L0Y3">
    <property type="expression patterns" value="baseline and differential"/>
</dbReference>
<dbReference type="GO" id="GO:0005759">
    <property type="term" value="C:mitochondrial matrix"/>
    <property type="evidence" value="ECO:0000304"/>
    <property type="project" value="Reactome"/>
</dbReference>
<dbReference type="GO" id="GO:0042645">
    <property type="term" value="C:mitochondrial nucleoid"/>
    <property type="evidence" value="ECO:0000314"/>
    <property type="project" value="UniProtKB"/>
</dbReference>
<dbReference type="GO" id="GO:0030678">
    <property type="term" value="C:mitochondrial ribonuclease P complex"/>
    <property type="evidence" value="ECO:0000353"/>
    <property type="project" value="ComplexPortal"/>
</dbReference>
<dbReference type="GO" id="GO:0005739">
    <property type="term" value="C:mitochondrion"/>
    <property type="evidence" value="ECO:0000314"/>
    <property type="project" value="CAFA"/>
</dbReference>
<dbReference type="GO" id="GO:0005654">
    <property type="term" value="C:nucleoplasm"/>
    <property type="evidence" value="ECO:0000314"/>
    <property type="project" value="HPA"/>
</dbReference>
<dbReference type="GO" id="GO:0005634">
    <property type="term" value="C:nucleus"/>
    <property type="evidence" value="ECO:0000318"/>
    <property type="project" value="GO_Central"/>
</dbReference>
<dbReference type="GO" id="GO:0043527">
    <property type="term" value="C:tRNA methyltransferase complex"/>
    <property type="evidence" value="ECO:0000353"/>
    <property type="project" value="ComplexPortal"/>
</dbReference>
<dbReference type="GO" id="GO:0042802">
    <property type="term" value="F:identical protein binding"/>
    <property type="evidence" value="ECO:0000353"/>
    <property type="project" value="IntAct"/>
</dbReference>
<dbReference type="GO" id="GO:0003723">
    <property type="term" value="F:RNA binding"/>
    <property type="evidence" value="ECO:0007005"/>
    <property type="project" value="UniProtKB"/>
</dbReference>
<dbReference type="GO" id="GO:0160106">
    <property type="term" value="F:tRNA (adenine(9)-N1)-methyltransferase activity"/>
    <property type="evidence" value="ECO:0000314"/>
    <property type="project" value="GO_Central"/>
</dbReference>
<dbReference type="GO" id="GO:0052905">
    <property type="term" value="F:tRNA (guanosine(9)-N1)-methyltransferase activity"/>
    <property type="evidence" value="ECO:0000314"/>
    <property type="project" value="GO_Central"/>
</dbReference>
<dbReference type="GO" id="GO:0000049">
    <property type="term" value="F:tRNA binding"/>
    <property type="evidence" value="ECO:0000314"/>
    <property type="project" value="UniProtKB"/>
</dbReference>
<dbReference type="GO" id="GO:0000964">
    <property type="term" value="P:mitochondrial RNA 5'-end processing"/>
    <property type="evidence" value="ECO:0000315"/>
    <property type="project" value="UniProtKB"/>
</dbReference>
<dbReference type="GO" id="GO:1990180">
    <property type="term" value="P:mitochondrial tRNA 3'-end processing"/>
    <property type="evidence" value="ECO:0000314"/>
    <property type="project" value="UniProtKB"/>
</dbReference>
<dbReference type="GO" id="GO:0097745">
    <property type="term" value="P:mitochondrial tRNA 5'-end processing"/>
    <property type="evidence" value="ECO:0000314"/>
    <property type="project" value="UniProtKB"/>
</dbReference>
<dbReference type="GO" id="GO:0070901">
    <property type="term" value="P:mitochondrial tRNA methylation"/>
    <property type="evidence" value="ECO:0000314"/>
    <property type="project" value="ComplexPortal"/>
</dbReference>
<dbReference type="GO" id="GO:0090646">
    <property type="term" value="P:mitochondrial tRNA processing"/>
    <property type="evidence" value="ECO:0000315"/>
    <property type="project" value="UniProtKB"/>
</dbReference>
<dbReference type="GO" id="GO:0006397">
    <property type="term" value="P:mRNA processing"/>
    <property type="evidence" value="ECO:0000314"/>
    <property type="project" value="UniProtKB"/>
</dbReference>
<dbReference type="GO" id="GO:0070131">
    <property type="term" value="P:positive regulation of mitochondrial translation"/>
    <property type="evidence" value="ECO:0000315"/>
    <property type="project" value="UniProtKB"/>
</dbReference>
<dbReference type="CDD" id="cd18102">
    <property type="entry name" value="Trm10_MRRP1"/>
    <property type="match status" value="1"/>
</dbReference>
<dbReference type="FunFam" id="3.40.1280.30:FF:000003">
    <property type="entry name" value="tRNA methyltransferase 10C, mitochondrial RNase P subunit"/>
    <property type="match status" value="1"/>
</dbReference>
<dbReference type="Gene3D" id="3.40.1280.30">
    <property type="match status" value="1"/>
</dbReference>
<dbReference type="InterPro" id="IPR028564">
    <property type="entry name" value="MT_TRM10-typ"/>
</dbReference>
<dbReference type="InterPro" id="IPR038459">
    <property type="entry name" value="MT_TRM10-typ_sf"/>
</dbReference>
<dbReference type="InterPro" id="IPR025812">
    <property type="entry name" value="Trm10_C_MTase_dom"/>
</dbReference>
<dbReference type="InterPro" id="IPR007356">
    <property type="entry name" value="tRNA_m1G_MeTrfase_euk"/>
</dbReference>
<dbReference type="InterPro" id="IPR016009">
    <property type="entry name" value="tRNA_MeTrfase_TRMD/TRM10"/>
</dbReference>
<dbReference type="PANTHER" id="PTHR13563">
    <property type="entry name" value="TRNA (GUANINE-9-) METHYLTRANSFERASE"/>
    <property type="match status" value="1"/>
</dbReference>
<dbReference type="PANTHER" id="PTHR13563:SF5">
    <property type="entry name" value="TRNA METHYLTRANSFERASE 10 HOMOLOG C"/>
    <property type="match status" value="1"/>
</dbReference>
<dbReference type="Pfam" id="PF01746">
    <property type="entry name" value="tRNA_m1G_MT"/>
    <property type="match status" value="1"/>
</dbReference>
<dbReference type="PROSITE" id="PS51675">
    <property type="entry name" value="SAM_MT_TRM10"/>
    <property type="match status" value="1"/>
</dbReference>
<sequence>MAAFLKMSVSVNFFRPFTRFLVPFTLHRKRNNLTILQRYMSSKIPAVTYPKNESTPPSEELELDKWKTTMKSSVQEECVSTISSSKDEDPLAATREFIEMWRLLGREVPEHITEEELKTLMECVSNTAKKKYLKYLYTKEKVKKARQIKKEMKAAAREEAKNIKLLETTEEDKQKNFLFLRLWDRNMDIAMGWKGAQAMQFGQPLVFDMAYENYMKRKELQNTVSQLLESEGWNRRNVDPFHIYFCNLKIDGALHRELVKRYQEKWDKLLLTSTEKSHVDLFPKDSIIYLTADSPNVMTTFRHDKVYVIGSFVDKSMQPGTSLAKAKRLNLATECLPLDKYLQWEIGNKNLTLDQMIRILLCLKNNGNWQEALQFVPKRKHTGFLEISQHSQEFINRLKKAKT</sequence>
<reference key="1">
    <citation type="submission" date="2000-01" db="EMBL/GenBank/DDBJ databases">
        <title>A novel gene expressed in human liver cancer tissue.</title>
        <authorList>
            <person name="Li Y."/>
            <person name="Wu T."/>
            <person name="Xu S."/>
            <person name="Ren S."/>
            <person name="Chen Z."/>
            <person name="Han Z."/>
        </authorList>
    </citation>
    <scope>NUCLEOTIDE SEQUENCE [LARGE SCALE MRNA]</scope>
    <source>
        <tissue>Liver</tissue>
    </source>
</reference>
<reference key="2">
    <citation type="journal article" date="2004" name="Nat. Genet.">
        <title>Complete sequencing and characterization of 21,243 full-length human cDNAs.</title>
        <authorList>
            <person name="Ota T."/>
            <person name="Suzuki Y."/>
            <person name="Nishikawa T."/>
            <person name="Otsuki T."/>
            <person name="Sugiyama T."/>
            <person name="Irie R."/>
            <person name="Wakamatsu A."/>
            <person name="Hayashi K."/>
            <person name="Sato H."/>
            <person name="Nagai K."/>
            <person name="Kimura K."/>
            <person name="Makita H."/>
            <person name="Sekine M."/>
            <person name="Obayashi M."/>
            <person name="Nishi T."/>
            <person name="Shibahara T."/>
            <person name="Tanaka T."/>
            <person name="Ishii S."/>
            <person name="Yamamoto J."/>
            <person name="Saito K."/>
            <person name="Kawai Y."/>
            <person name="Isono Y."/>
            <person name="Nakamura Y."/>
            <person name="Nagahari K."/>
            <person name="Murakami K."/>
            <person name="Yasuda T."/>
            <person name="Iwayanagi T."/>
            <person name="Wagatsuma M."/>
            <person name="Shiratori A."/>
            <person name="Sudo H."/>
            <person name="Hosoiri T."/>
            <person name="Kaku Y."/>
            <person name="Kodaira H."/>
            <person name="Kondo H."/>
            <person name="Sugawara M."/>
            <person name="Takahashi M."/>
            <person name="Kanda K."/>
            <person name="Yokoi T."/>
            <person name="Furuya T."/>
            <person name="Kikkawa E."/>
            <person name="Omura Y."/>
            <person name="Abe K."/>
            <person name="Kamihara K."/>
            <person name="Katsuta N."/>
            <person name="Sato K."/>
            <person name="Tanikawa M."/>
            <person name="Yamazaki M."/>
            <person name="Ninomiya K."/>
            <person name="Ishibashi T."/>
            <person name="Yamashita H."/>
            <person name="Murakawa K."/>
            <person name="Fujimori K."/>
            <person name="Tanai H."/>
            <person name="Kimata M."/>
            <person name="Watanabe M."/>
            <person name="Hiraoka S."/>
            <person name="Chiba Y."/>
            <person name="Ishida S."/>
            <person name="Ono Y."/>
            <person name="Takiguchi S."/>
            <person name="Watanabe S."/>
            <person name="Yosida M."/>
            <person name="Hotuta T."/>
            <person name="Kusano J."/>
            <person name="Kanehori K."/>
            <person name="Takahashi-Fujii A."/>
            <person name="Hara H."/>
            <person name="Tanase T.-O."/>
            <person name="Nomura Y."/>
            <person name="Togiya S."/>
            <person name="Komai F."/>
            <person name="Hara R."/>
            <person name="Takeuchi K."/>
            <person name="Arita M."/>
            <person name="Imose N."/>
            <person name="Musashino K."/>
            <person name="Yuuki H."/>
            <person name="Oshima A."/>
            <person name="Sasaki N."/>
            <person name="Aotsuka S."/>
            <person name="Yoshikawa Y."/>
            <person name="Matsunawa H."/>
            <person name="Ichihara T."/>
            <person name="Shiohata N."/>
            <person name="Sano S."/>
            <person name="Moriya S."/>
            <person name="Momiyama H."/>
            <person name="Satoh N."/>
            <person name="Takami S."/>
            <person name="Terashima Y."/>
            <person name="Suzuki O."/>
            <person name="Nakagawa S."/>
            <person name="Senoh A."/>
            <person name="Mizoguchi H."/>
            <person name="Goto Y."/>
            <person name="Shimizu F."/>
            <person name="Wakebe H."/>
            <person name="Hishigaki H."/>
            <person name="Watanabe T."/>
            <person name="Sugiyama A."/>
            <person name="Takemoto M."/>
            <person name="Kawakami B."/>
            <person name="Yamazaki M."/>
            <person name="Watanabe K."/>
            <person name="Kumagai A."/>
            <person name="Itakura S."/>
            <person name="Fukuzumi Y."/>
            <person name="Fujimori Y."/>
            <person name="Komiyama M."/>
            <person name="Tashiro H."/>
            <person name="Tanigami A."/>
            <person name="Fujiwara T."/>
            <person name="Ono T."/>
            <person name="Yamada K."/>
            <person name="Fujii Y."/>
            <person name="Ozaki K."/>
            <person name="Hirao M."/>
            <person name="Ohmori Y."/>
            <person name="Kawabata A."/>
            <person name="Hikiji T."/>
            <person name="Kobatake N."/>
            <person name="Inagaki H."/>
            <person name="Ikema Y."/>
            <person name="Okamoto S."/>
            <person name="Okitani R."/>
            <person name="Kawakami T."/>
            <person name="Noguchi S."/>
            <person name="Itoh T."/>
            <person name="Shigeta K."/>
            <person name="Senba T."/>
            <person name="Matsumura K."/>
            <person name="Nakajima Y."/>
            <person name="Mizuno T."/>
            <person name="Morinaga M."/>
            <person name="Sasaki M."/>
            <person name="Togashi T."/>
            <person name="Oyama M."/>
            <person name="Hata H."/>
            <person name="Watanabe M."/>
            <person name="Komatsu T."/>
            <person name="Mizushima-Sugano J."/>
            <person name="Satoh T."/>
            <person name="Shirai Y."/>
            <person name="Takahashi Y."/>
            <person name="Nakagawa K."/>
            <person name="Okumura K."/>
            <person name="Nagase T."/>
            <person name="Nomura N."/>
            <person name="Kikuchi H."/>
            <person name="Masuho Y."/>
            <person name="Yamashita R."/>
            <person name="Nakai K."/>
            <person name="Yada T."/>
            <person name="Nakamura Y."/>
            <person name="Ohara O."/>
            <person name="Isogai T."/>
            <person name="Sugano S."/>
        </authorList>
    </citation>
    <scope>NUCLEOTIDE SEQUENCE [LARGE SCALE MRNA]</scope>
    <source>
        <tissue>Signet-ring cell carcinoma</tissue>
    </source>
</reference>
<reference key="3">
    <citation type="submission" date="2005-09" db="EMBL/GenBank/DDBJ databases">
        <authorList>
            <person name="Mural R.J."/>
            <person name="Istrail S."/>
            <person name="Sutton G.G."/>
            <person name="Florea L."/>
            <person name="Halpern A.L."/>
            <person name="Mobarry C.M."/>
            <person name="Lippert R."/>
            <person name="Walenz B."/>
            <person name="Shatkay H."/>
            <person name="Dew I."/>
            <person name="Miller J.R."/>
            <person name="Flanigan M.J."/>
            <person name="Edwards N.J."/>
            <person name="Bolanos R."/>
            <person name="Fasulo D."/>
            <person name="Halldorsson B.V."/>
            <person name="Hannenhalli S."/>
            <person name="Turner R."/>
            <person name="Yooseph S."/>
            <person name="Lu F."/>
            <person name="Nusskern D.R."/>
            <person name="Shue B.C."/>
            <person name="Zheng X.H."/>
            <person name="Zhong F."/>
            <person name="Delcher A.L."/>
            <person name="Huson D.H."/>
            <person name="Kravitz S.A."/>
            <person name="Mouchard L."/>
            <person name="Reinert K."/>
            <person name="Remington K.A."/>
            <person name="Clark A.G."/>
            <person name="Waterman M.S."/>
            <person name="Eichler E.E."/>
            <person name="Adams M.D."/>
            <person name="Hunkapiller M.W."/>
            <person name="Myers E.W."/>
            <person name="Venter J.C."/>
        </authorList>
    </citation>
    <scope>NUCLEOTIDE SEQUENCE [LARGE SCALE GENOMIC DNA]</scope>
</reference>
<reference key="4">
    <citation type="journal article" date="2004" name="Genome Res.">
        <title>The status, quality, and expansion of the NIH full-length cDNA project: the Mammalian Gene Collection (MGC).</title>
        <authorList>
            <consortium name="The MGC Project Team"/>
        </authorList>
    </citation>
    <scope>NUCLEOTIDE SEQUENCE [LARGE SCALE MRNA]</scope>
    <source>
        <tissue>Prostate</tissue>
    </source>
</reference>
<reference key="5">
    <citation type="journal article" date="1999" name="Int. J. Cancer">
        <title>Antigens recognized by autologous antibody in patients with renal-cell carcinoma.</title>
        <authorList>
            <person name="Scanlan M.J."/>
            <person name="Gordan J.D."/>
            <person name="Williamson B."/>
            <person name="Stockert E."/>
            <person name="Bander N.H."/>
            <person name="Jongeneel C.V."/>
            <person name="Gure A.O."/>
            <person name="Jaeger D."/>
            <person name="Jaeger E."/>
            <person name="Knuth A."/>
            <person name="Chen Y.-T."/>
            <person name="Old L.J."/>
        </authorList>
    </citation>
    <scope>NUCLEOTIDE SEQUENCE [MRNA] OF 1-129</scope>
    <scope>IDENTIFICATION AS A RENAL CANCER ANTIGEN</scope>
    <scope>VARIANT ARG-56</scope>
    <source>
        <tissue>Renal cell carcinoma</tissue>
    </source>
</reference>
<reference key="6">
    <citation type="journal article" date="2003" name="Zhonghua Gan Zang Bing Za Zhi">
        <title>Screening of the genes of hepatitis B virus preS2 interacting proteins.</title>
        <authorList>
            <person name="Lu Y.Y."/>
            <person name="Li K."/>
            <person name="Wang L."/>
            <person name="Liu Y."/>
            <person name="Wang Y.D."/>
            <person name="Cheng J."/>
            <person name="Zhang L.X."/>
        </authorList>
    </citation>
    <scope>NUCLEOTIDE SEQUENCE [MRNA] OF 6-403</scope>
</reference>
<reference key="7">
    <citation type="journal article" date="2008" name="Cell">
        <title>RNase P without RNA: identification and functional reconstitution of the human mitochondrial tRNA processing enzyme.</title>
        <authorList>
            <person name="Holzmann J."/>
            <person name="Frank P."/>
            <person name="Loeffler E."/>
            <person name="Bennett K.L."/>
            <person name="Gerner C."/>
            <person name="Rossmanith W."/>
        </authorList>
    </citation>
    <scope>IDENTIFICATION BY MASS SPECTROMETRY</scope>
    <scope>FUNCTION</scope>
    <scope>INTERACTION WITH HSD17B10 AND KIAA0391</scope>
    <scope>SUBCELLULAR LOCATION</scope>
</reference>
<reference key="8">
    <citation type="journal article" date="2011" name="BMC Syst. Biol.">
        <title>Initial characterization of the human central proteome.</title>
        <authorList>
            <person name="Burkard T.R."/>
            <person name="Planyavsky M."/>
            <person name="Kaupe I."/>
            <person name="Breitwieser F.P."/>
            <person name="Buerckstuemmer T."/>
            <person name="Bennett K.L."/>
            <person name="Superti-Furga G."/>
            <person name="Colinge J."/>
        </authorList>
    </citation>
    <scope>IDENTIFICATION BY MASS SPECTROMETRY [LARGE SCALE ANALYSIS]</scope>
</reference>
<reference key="9">
    <citation type="journal article" date="2011" name="RNA Biol.">
        <title>Involvement of human ELAC2 gene product in 3' end processing of mitochondrial tRNAs.</title>
        <authorList>
            <person name="Brzezniak L.K."/>
            <person name="Bijata M."/>
            <person name="Szczesny R.J."/>
            <person name="Stepien P.P."/>
        </authorList>
    </citation>
    <scope>FUNCTION</scope>
</reference>
<reference key="10">
    <citation type="journal article" date="2012" name="Nucleic Acids Res.">
        <title>A subcomplex of human mitochondrial RNase P is a bifunctional methyltransferase--extensive moonlighting in mitochondrial tRNA biogenesis.</title>
        <authorList>
            <person name="Vilardo E."/>
            <person name="Nachbagauer C."/>
            <person name="Buzet A."/>
            <person name="Taschner A."/>
            <person name="Holzmann J."/>
            <person name="Rossmanith W."/>
        </authorList>
    </citation>
    <scope>FUNCTION</scope>
    <scope>CATALYTIC ACTIVITY</scope>
    <scope>INTERACTION WITH HSD17B10</scope>
    <scope>MUTAGENESIS OF ASP-314</scope>
</reference>
<reference key="11">
    <citation type="journal article" date="2013" name="Cell Metab.">
        <title>GRSF1 regulates RNA processing in mitochondrial RNA granules.</title>
        <authorList>
            <person name="Jourdain A.A."/>
            <person name="Koppen M."/>
            <person name="Wydro M."/>
            <person name="Rodley C.D."/>
            <person name="Lightowlers R.N."/>
            <person name="Chrzanowska-Lightowlers Z.M."/>
            <person name="Martinou J.C."/>
        </authorList>
    </citation>
    <scope>SUBCELLULAR LOCATION</scope>
    <scope>INTERACTION WITH GRSF1</scope>
</reference>
<reference key="12">
    <citation type="journal article" date="2013" name="J. Proteome Res.">
        <title>Toward a comprehensive characterization of a human cancer cell phosphoproteome.</title>
        <authorList>
            <person name="Zhou H."/>
            <person name="Di Palma S."/>
            <person name="Preisinger C."/>
            <person name="Peng M."/>
            <person name="Polat A.N."/>
            <person name="Heck A.J."/>
            <person name="Mohammed S."/>
        </authorList>
    </citation>
    <scope>IDENTIFICATION BY MASS SPECTROMETRY [LARGE SCALE ANALYSIS]</scope>
    <source>
        <tissue>Erythroleukemia</tissue>
    </source>
</reference>
<reference key="13">
    <citation type="journal article" date="2014" name="Cell Metab.">
        <title>Initial steps in RNA processing and ribosome assembly occur at mitochondrial DNA nucleoids.</title>
        <authorList>
            <person name="Bogenhagen D.F."/>
            <person name="Martin D.W."/>
            <person name="Koller A."/>
        </authorList>
    </citation>
    <scope>IDENTIFICATION BY MASS SPECTROMETRY</scope>
    <scope>SUBCELLULAR LOCATION</scope>
    <scope>FUNCTION</scope>
</reference>
<reference key="14">
    <citation type="journal article" date="2015" name="Proteomics">
        <title>N-terminome analysis of the human mitochondrial proteome.</title>
        <authorList>
            <person name="Vaca Jacome A.S."/>
            <person name="Rabilloud T."/>
            <person name="Schaeffer-Reiss C."/>
            <person name="Rompais M."/>
            <person name="Ayoub D."/>
            <person name="Lane L."/>
            <person name="Bairoch A."/>
            <person name="Van Dorsselaer A."/>
            <person name="Carapito C."/>
        </authorList>
    </citation>
    <scope>IDENTIFICATION BY MASS SPECTROMETRY [LARGE SCALE ANALYSIS]</scope>
</reference>
<reference key="15">
    <citation type="journal article" date="2016" name="Am. J. Hum. Genet.">
        <title>Recessive mutations in TRMT10C cause defects in mitochondrial RNA processing and multiple respiratory chain deficiencies.</title>
        <authorList>
            <person name="Metodiev M.D."/>
            <person name="Thompson K."/>
            <person name="Alston C.L."/>
            <person name="Morris A.A."/>
            <person name="He L."/>
            <person name="Assouline Z."/>
            <person name="Rio M."/>
            <person name="Bahi-Buisson N."/>
            <person name="Pyle A."/>
            <person name="Griffin H."/>
            <person name="Siira S."/>
            <person name="Filipovska A."/>
            <person name="Munnich A."/>
            <person name="Chinnery P.F."/>
            <person name="McFarland R."/>
            <person name="Roetig A."/>
            <person name="Taylor R.W."/>
        </authorList>
    </citation>
    <scope>FUNCTION</scope>
    <scope>INVOLVEMENT IN COXPD30</scope>
    <scope>VARIANTS COXPD30 LEU-181 AND ALA-272</scope>
    <scope>CHARACTERIZATION OF VARIANTS COXPD30 LEU-181 AND ALA-272</scope>
</reference>
<reference key="16">
    <citation type="journal article" date="2017" name="Mol. Cell">
        <title>Base-resolution mapping reveals distinct m1A methylome in nuclear- and mitochondrial-encoded transcripts.</title>
        <authorList>
            <person name="Li X."/>
            <person name="Xiong X."/>
            <person name="Zhang M."/>
            <person name="Wang K."/>
            <person name="Chen Y."/>
            <person name="Zhou J."/>
            <person name="Mao Y."/>
            <person name="Lv J."/>
            <person name="Yi D."/>
            <person name="Chen X.W."/>
            <person name="Wang C."/>
            <person name="Qian S.B."/>
            <person name="Yi C."/>
        </authorList>
    </citation>
    <scope>CAUTION</scope>
</reference>
<reference key="17">
    <citation type="journal article" date="2017" name="Nature">
        <title>The m(1)A landscape on cytosolic and mitochondrial mRNA at single-base resolution.</title>
        <authorList>
            <person name="Safra M."/>
            <person name="Sas-Chen A."/>
            <person name="Nir R."/>
            <person name="Winkler R."/>
            <person name="Nachshon A."/>
            <person name="Bar-Yaacov D."/>
            <person name="Erlacher M."/>
            <person name="Rossmanith W."/>
            <person name="Stern-Ginossar N."/>
            <person name="Schwartz S."/>
        </authorList>
    </citation>
    <scope>FUNCTION</scope>
    <scope>CATALYTIC ACTIVITY</scope>
</reference>
<reference key="18">
    <citation type="journal article" date="2017" name="Nucleic Acids Res.">
        <title>The MRPP1/MRPP2 complex is a tRNA-maturation platform in human mitochondria.</title>
        <authorList>
            <person name="Reinhard L."/>
            <person name="Sridhara S."/>
            <person name="Haellberg B.M."/>
        </authorList>
    </citation>
    <scope>FUNCTION</scope>
    <scope>INTERACTION WITH HSD17B10</scope>
</reference>
<accession>Q7L0Y3</accession>
<accession>Q9NRG5</accession>
<accession>Q9NX54</accession>
<accession>Q9Y596</accession>
<evidence type="ECO:0000250" key="1">
    <source>
        <dbReference type="UniProtKB" id="Q3UFY8"/>
    </source>
</evidence>
<evidence type="ECO:0000255" key="2"/>
<evidence type="ECO:0000255" key="3">
    <source>
        <dbReference type="PROSITE-ProRule" id="PRU01012"/>
    </source>
</evidence>
<evidence type="ECO:0000269" key="4">
    <source>
    </source>
</evidence>
<evidence type="ECO:0000269" key="5">
    <source>
    </source>
</evidence>
<evidence type="ECO:0000269" key="6">
    <source>
    </source>
</evidence>
<evidence type="ECO:0000269" key="7">
    <source>
    </source>
</evidence>
<evidence type="ECO:0000269" key="8">
    <source>
    </source>
</evidence>
<evidence type="ECO:0000269" key="9">
    <source>
    </source>
</evidence>
<evidence type="ECO:0000269" key="10">
    <source>
    </source>
</evidence>
<evidence type="ECO:0000269" key="11">
    <source>
    </source>
</evidence>
<evidence type="ECO:0000269" key="12">
    <source>
    </source>
</evidence>
<evidence type="ECO:0000269" key="13">
    <source>
    </source>
</evidence>
<evidence type="ECO:0000303" key="14">
    <source>
    </source>
</evidence>
<evidence type="ECO:0000303" key="15">
    <source>
    </source>
</evidence>
<evidence type="ECO:0000303" key="16">
    <source>
    </source>
</evidence>
<evidence type="ECO:0000303" key="17">
    <source>
    </source>
</evidence>
<evidence type="ECO:0000305" key="18"/>
<evidence type="ECO:0000312" key="19">
    <source>
        <dbReference type="HGNC" id="HGNC:26022"/>
    </source>
</evidence>
<evidence type="ECO:0007829" key="20">
    <source>
        <dbReference type="PDB" id="7ONU"/>
    </source>
</evidence>
<evidence type="ECO:0007829" key="21">
    <source>
        <dbReference type="PDB" id="9EY1"/>
    </source>
</evidence>
<evidence type="ECO:0007829" key="22">
    <source>
        <dbReference type="PDB" id="9GCH"/>
    </source>
</evidence>
<proteinExistence type="evidence at protein level"/>
<keyword id="KW-0002">3D-structure</keyword>
<keyword id="KW-0175">Coiled coil</keyword>
<keyword id="KW-0225">Disease variant</keyword>
<keyword id="KW-0489">Methyltransferase</keyword>
<keyword id="KW-0496">Mitochondrion</keyword>
<keyword id="KW-1135">Mitochondrion nucleoid</keyword>
<keyword id="KW-0597">Phosphoprotein</keyword>
<keyword id="KW-1274">Primary mitochondrial disease</keyword>
<keyword id="KW-1267">Proteomics identification</keyword>
<keyword id="KW-1185">Reference proteome</keyword>
<keyword id="KW-0949">S-adenosyl-L-methionine</keyword>
<keyword id="KW-0808">Transferase</keyword>
<keyword id="KW-0809">Transit peptide</keyword>
<keyword id="KW-0819">tRNA processing</keyword>
<comment type="function">
    <text evidence="5 6 7 9 10 11 12">Mitochondrial tRNA N(1)-methyltransferase involved in mitochondrial tRNA maturation (PubMed:18984158, PubMed:21593607, PubMed:23042678, PubMed:27132592). Component of mitochondrial ribonuclease P, a complex composed of TRMT10C/MRPP1, HSD17B10/MRPP2 and PRORP/MRPP3, which cleaves tRNA molecules in their 5'-ends (PubMed:18984158). Together with HSD17B10/MRPP2, forms a subcomplex of the mitochondrial ribonuclease P, named MRPP1-MRPP2 subcomplex, which displays functions that are independent of the ribonuclease P activity (PubMed:23042678, PubMed:29040705). The MRPP1-MRPP2 subcomplex catalyzes the formation of N(1)-methylguanine and N(1)-methyladenine at position 9 (m1G9 and m1A9, respectively) in tRNAs; TRMT10C/MRPP1 acting as the catalytic N(1)-methyltransferase subunit (PubMed:23042678). The MRPP1-MRPP2 subcomplex also acts as a tRNA maturation platform: following 5'-end cleavage by the mitochondrial ribonuclease P complex, the MRPP1-MRPP2 subcomplex enhances the efficiency of 3'-processing catalyzed by ELAC2, retains the tRNA product after ELAC2 processing and presents the nascent tRNA to the mitochondrial CCA tRNA nucleotidyltransferase TRNT1 enzyme (PubMed:29040705). In addition to tRNA N(1)-methyltransferase activity, TRMT10C/MRPP1 also acts as a mRNA N(1)-methyltransferase by mediating methylation of adenosine residues at the N(1) position of MT-ND5 mRNA (PubMed:29072297). Associates with mitochondrial DNA complexes at the nucleoids to initiate RNA processing and ribosome assembly.</text>
</comment>
<comment type="catalytic activity">
    <reaction evidence="7">
        <text>adenosine(9) in tRNA + S-adenosyl-L-methionine = N(1)-methyladenosine(9) in tRNA + S-adenosyl-L-homocysteine + H(+)</text>
        <dbReference type="Rhea" id="RHEA:43148"/>
        <dbReference type="Rhea" id="RHEA-COMP:10363"/>
        <dbReference type="Rhea" id="RHEA-COMP:10364"/>
        <dbReference type="ChEBI" id="CHEBI:15378"/>
        <dbReference type="ChEBI" id="CHEBI:57856"/>
        <dbReference type="ChEBI" id="CHEBI:59789"/>
        <dbReference type="ChEBI" id="CHEBI:74411"/>
        <dbReference type="ChEBI" id="CHEBI:74491"/>
        <dbReference type="EC" id="2.1.1.218"/>
    </reaction>
</comment>
<comment type="catalytic activity">
    <reaction evidence="7">
        <text>guanosine(9) in tRNA + S-adenosyl-L-methionine = N(1)-methylguanosine(9) in tRNA + S-adenosyl-L-homocysteine + H(+)</text>
        <dbReference type="Rhea" id="RHEA:43156"/>
        <dbReference type="Rhea" id="RHEA-COMP:10367"/>
        <dbReference type="Rhea" id="RHEA-COMP:10368"/>
        <dbReference type="ChEBI" id="CHEBI:15378"/>
        <dbReference type="ChEBI" id="CHEBI:57856"/>
        <dbReference type="ChEBI" id="CHEBI:59789"/>
        <dbReference type="ChEBI" id="CHEBI:73542"/>
        <dbReference type="ChEBI" id="CHEBI:74269"/>
        <dbReference type="EC" id="2.1.1.221"/>
    </reaction>
</comment>
<comment type="catalytic activity">
    <reaction evidence="12">
        <text>an adenosine in mRNA + S-adenosyl-L-methionine = an N(1)-methyladenosine in mRNA + S-adenosyl-L-homocysteine + H(+)</text>
        <dbReference type="Rhea" id="RHEA:55392"/>
        <dbReference type="Rhea" id="RHEA-COMP:12414"/>
        <dbReference type="Rhea" id="RHEA-COMP:12415"/>
        <dbReference type="ChEBI" id="CHEBI:15378"/>
        <dbReference type="ChEBI" id="CHEBI:57856"/>
        <dbReference type="ChEBI" id="CHEBI:59789"/>
        <dbReference type="ChEBI" id="CHEBI:74411"/>
        <dbReference type="ChEBI" id="CHEBI:74491"/>
    </reaction>
</comment>
<comment type="subunit">
    <text evidence="5 7 8 11">Component of mitochondrial ribonuclease P, a complex composed of TRMT10C/MRPP1, HSD17B10/MRPP2 and PRORP/MRPP3 (PubMed:18984158). Interacts with HSD17B10/MRPP2; forming the MRPP1-MRPP2 subcomplex of the mitochondrial ribonuclease P complex (PubMed:23042678, PubMed:29040705). Interacts with GRSF1 (PubMed:23473034).</text>
</comment>
<comment type="interaction">
    <interactant intactId="EBI-2107046">
        <id>Q7L0Y3</id>
    </interactant>
    <interactant intactId="EBI-79964">
        <id>Q99714</id>
        <label>HSD17B10</label>
    </interactant>
    <organismsDiffer>false</organismsDiffer>
    <experiments>24</experiments>
</comment>
<comment type="interaction">
    <interactant intactId="EBI-2107046">
        <id>Q7L0Y3</id>
    </interactant>
    <interactant intactId="EBI-2107046">
        <id>Q7L0Y3</id>
        <label>TRMT10C</label>
    </interactant>
    <organismsDiffer>false</organismsDiffer>
    <experiments>2</experiments>
</comment>
<comment type="subcellular location">
    <subcellularLocation>
        <location evidence="5 8 9">Mitochondrion matrix</location>
        <location evidence="5 8 9">Mitochondrion nucleoid</location>
    </subcellularLocation>
</comment>
<comment type="disease" evidence="10">
    <disease id="DI-04745">
        <name>Combined oxidative phosphorylation deficiency 30</name>
        <acronym>COXPD30</acronym>
        <description>An autosomal recessive, severe mitochondrial disease characterized by lactic acidosis, hypotonia, feeding difficulties, deafness, and respiratory failure with fatal issue. Patient skeletal muscle cells show decreased activities of mitochondrial complexes I, III and IV.</description>
        <dbReference type="MIM" id="616974"/>
    </disease>
    <text>The disease is caused by variants affecting the gene represented in this entry.</text>
</comment>
<comment type="similarity">
    <text evidence="3">Belongs to the class IV-like SAM-binding methyltransferase superfamily. TRM10 family.</text>
</comment>
<comment type="caution">
    <text evidence="18">It is uncertain whether Met-1 or Met-7 is the initiator.</text>
</comment>
<comment type="caution">
    <text evidence="12 13">The identity of the enzyme catalyzing mitochondrial mRNA N(1)-methyltransferase is unclear. According to a report, mitochondrial mRNA N(1)-methyltransferase activity is catalyzed by TRMT61B (AC Q9BVS5) (PubMed:29107537). According to a second report, it is mediated by TRMT10C (PubMed:29072297). As both reports only tested one protein (either TRMT61B or TRMT10C), it is possible that both proteins have this activity.</text>
</comment>
<comment type="sequence caution" evidence="18">
    <conflict type="erroneous initiation">
        <sequence resource="EMBL-CDS" id="AAD42877"/>
    </conflict>
    <text>Extended N-terminus.</text>
</comment>
<comment type="sequence caution" evidence="18">
    <conflict type="erroneous initiation">
        <sequence resource="EMBL-CDS" id="AAH35967"/>
    </conflict>
    <text>Truncated N-terminus.</text>
</comment>
<comment type="sequence caution" evidence="18">
    <conflict type="frameshift">
        <sequence resource="EMBL-CDS" id="BAA91166"/>
    </conflict>
</comment>
<gene>
    <name evidence="19" type="primary">TRMT10C</name>
    <name evidence="16" type="synonym">MRPP1</name>
    <name type="synonym">RG9MTD1</name>
</gene>
<feature type="transit peptide" description="Mitochondrion" evidence="2">
    <location>
        <begin position="1"/>
        <end position="39"/>
    </location>
</feature>
<feature type="chain" id="PRO_0000311309" description="tRNA methyltransferase 10 homolog C">
    <location>
        <begin position="40"/>
        <end position="403"/>
    </location>
</feature>
<feature type="domain" description="SAM-dependent MTase TRM10-type" evidence="3">
    <location>
        <begin position="191"/>
        <end position="383"/>
    </location>
</feature>
<feature type="coiled-coil region" evidence="2">
    <location>
        <begin position="138"/>
        <end position="169"/>
    </location>
</feature>
<feature type="modified residue" description="Phosphoserine" evidence="1">
    <location>
        <position position="84"/>
    </location>
</feature>
<feature type="sequence variant" id="VAR_057355" description="In dbSNP:rs3762735." evidence="4">
    <original>P</original>
    <variation>R</variation>
    <location>
        <position position="56"/>
    </location>
</feature>
<feature type="sequence variant" id="VAR_057356" description="In dbSNP:rs16844031.">
    <original>K</original>
    <variation>N</variation>
    <location>
        <position position="164"/>
    </location>
</feature>
<feature type="sequence variant" id="VAR_076993" description="In COXPD30; decreased protein abundance; impaired mitochondrial tRNA processing; has no effect on steady-state mitochondrial-mRNA and mitochondrial-tRNA levels but indirectly impairs mitochondrial translation; dbSNP:rs199730889." evidence="10">
    <original>R</original>
    <variation>L</variation>
    <location>
        <position position="181"/>
    </location>
</feature>
<feature type="sequence variant" id="VAR_076994" description="In COXPD30; decreased protein abundance; impaired mitochondrial tRNA processing; has no effect on steady-state mitochondrial-mRNA and mitochondrial-tRNA levels but indirectly impairs mitochondrial translation; dbSNP:rs875989831." evidence="10">
    <original>T</original>
    <variation>A</variation>
    <location>
        <position position="272"/>
    </location>
</feature>
<feature type="mutagenesis site" description="Abolished mitochondrial tRNA methylation. Does not affect mitochondrial tRNA 5'-end processing." evidence="7">
    <original>D</original>
    <variation>N</variation>
    <location>
        <position position="314"/>
    </location>
</feature>
<feature type="helix" evidence="22">
    <location>
        <begin position="94"/>
        <end position="103"/>
    </location>
</feature>
<feature type="helix" evidence="22">
    <location>
        <begin position="114"/>
        <end position="122"/>
    </location>
</feature>
<feature type="helix" evidence="22">
    <location>
        <begin position="126"/>
        <end position="163"/>
    </location>
</feature>
<feature type="helix" evidence="22">
    <location>
        <begin position="183"/>
        <end position="201"/>
    </location>
</feature>
<feature type="strand" evidence="22">
    <location>
        <begin position="204"/>
        <end position="208"/>
    </location>
</feature>
<feature type="helix" evidence="22">
    <location>
        <begin position="212"/>
        <end position="214"/>
    </location>
</feature>
<feature type="helix" evidence="22">
    <location>
        <begin position="217"/>
        <end position="236"/>
    </location>
</feature>
<feature type="strand" evidence="22">
    <location>
        <begin position="237"/>
        <end position="239"/>
    </location>
</feature>
<feature type="strand" evidence="22">
    <location>
        <begin position="242"/>
        <end position="247"/>
    </location>
</feature>
<feature type="strand" evidence="21">
    <location>
        <begin position="250"/>
        <end position="252"/>
    </location>
</feature>
<feature type="helix" evidence="22">
    <location>
        <begin position="253"/>
        <end position="262"/>
    </location>
</feature>
<feature type="helix" evidence="22">
    <location>
        <begin position="263"/>
        <end position="268"/>
    </location>
</feature>
<feature type="strand" evidence="22">
    <location>
        <begin position="270"/>
        <end position="273"/>
    </location>
</feature>
<feature type="helix" evidence="22">
    <location>
        <begin position="278"/>
        <end position="280"/>
    </location>
</feature>
<feature type="helix" evidence="22">
    <location>
        <begin position="284"/>
        <end position="286"/>
    </location>
</feature>
<feature type="strand" evidence="22">
    <location>
        <begin position="287"/>
        <end position="290"/>
    </location>
</feature>
<feature type="strand" evidence="22">
    <location>
        <begin position="295"/>
        <end position="297"/>
    </location>
</feature>
<feature type="strand" evidence="22">
    <location>
        <begin position="305"/>
        <end position="310"/>
    </location>
</feature>
<feature type="strand" evidence="20">
    <location>
        <begin position="316"/>
        <end position="318"/>
    </location>
</feature>
<feature type="helix" evidence="22">
    <location>
        <begin position="321"/>
        <end position="328"/>
    </location>
</feature>
<feature type="strand" evidence="22">
    <location>
        <begin position="332"/>
        <end position="335"/>
    </location>
</feature>
<feature type="helix" evidence="22">
    <location>
        <begin position="338"/>
        <end position="341"/>
    </location>
</feature>
<feature type="strand" evidence="22">
    <location>
        <begin position="342"/>
        <end position="344"/>
    </location>
</feature>
<feature type="helix" evidence="22">
    <location>
        <begin position="353"/>
        <end position="364"/>
    </location>
</feature>
<feature type="helix" evidence="22">
    <location>
        <begin position="369"/>
        <end position="372"/>
    </location>
</feature>
<feature type="helix" evidence="22">
    <location>
        <begin position="373"/>
        <end position="375"/>
    </location>
</feature>
<feature type="helix" evidence="22">
    <location>
        <begin position="378"/>
        <end position="380"/>
    </location>
</feature>
<feature type="strand" evidence="22">
    <location>
        <begin position="381"/>
        <end position="384"/>
    </location>
</feature>